<dbReference type="EMBL" id="AJ133023">
    <property type="protein sequence ID" value="CAB50926.1"/>
    <property type="molecule type" value="mRNA"/>
</dbReference>
<dbReference type="SMR" id="Q9Y068"/>
<dbReference type="VEuPathDB" id="FungiDB:PITG_16923"/>
<dbReference type="GO" id="GO:0016020">
    <property type="term" value="C:membrane"/>
    <property type="evidence" value="ECO:0007669"/>
    <property type="project" value="UniProtKB-SubCell"/>
</dbReference>
<dbReference type="InterPro" id="IPR000612">
    <property type="entry name" value="PMP3"/>
</dbReference>
<dbReference type="PANTHER" id="PTHR21659">
    <property type="entry name" value="HYDROPHOBIC PROTEIN RCI2 LOW TEMPERATURE AND SALT RESPONSIVE PROTEIN LTI6 -RELATED"/>
    <property type="match status" value="1"/>
</dbReference>
<dbReference type="PANTHER" id="PTHR21659:SF42">
    <property type="entry name" value="UPF0057 MEMBRANE PROTEIN ZK632.10-RELATED"/>
    <property type="match status" value="1"/>
</dbReference>
<dbReference type="Pfam" id="PF01679">
    <property type="entry name" value="Pmp3"/>
    <property type="match status" value="1"/>
</dbReference>
<dbReference type="PROSITE" id="PS01309">
    <property type="entry name" value="UPF0057"/>
    <property type="match status" value="1"/>
</dbReference>
<evidence type="ECO:0000255" key="1"/>
<evidence type="ECO:0000305" key="2"/>
<gene>
    <name type="primary">RIC1</name>
</gene>
<sequence length="57" mass="6142">MPITCGDIPRLICSVIIPPVGVFFQVGCTKDLAINCLLTVLGYIPGVIHAVYILIKE</sequence>
<name>RIC1_PHYIN</name>
<proteinExistence type="inferred from homology"/>
<comment type="subcellular location">
    <subcellularLocation>
        <location evidence="2">Membrane</location>
        <topology evidence="2">Multi-pass membrane protein</topology>
    </subcellularLocation>
</comment>
<comment type="similarity">
    <text evidence="2">Belongs to the UPF0057 (PMP3) family.</text>
</comment>
<accession>Q9Y068</accession>
<organism>
    <name type="scientific">Phytophthora infestans</name>
    <name type="common">Potato late blight agent</name>
    <name type="synonym">Botrytis infestans</name>
    <dbReference type="NCBI Taxonomy" id="4787"/>
    <lineage>
        <taxon>Eukaryota</taxon>
        <taxon>Sar</taxon>
        <taxon>Stramenopiles</taxon>
        <taxon>Oomycota</taxon>
        <taxon>Peronosporales</taxon>
        <taxon>Peronosporaceae</taxon>
        <taxon>Phytophthora</taxon>
    </lineage>
</organism>
<feature type="chain" id="PRO_0000193984" description="Protein Ric1">
    <location>
        <begin position="1"/>
        <end position="57"/>
    </location>
</feature>
<feature type="transmembrane region" description="Helical" evidence="1">
    <location>
        <begin position="8"/>
        <end position="28"/>
    </location>
</feature>
<feature type="transmembrane region" description="Helical" evidence="1">
    <location>
        <begin position="34"/>
        <end position="54"/>
    </location>
</feature>
<protein>
    <recommendedName>
        <fullName>Protein Ric1</fullName>
    </recommendedName>
</protein>
<reference key="1">
    <citation type="journal article" date="1999" name="Curr. Genet.">
        <title>Ric1, a Phytophthora infestans gene with homology to stress-induced genes.</title>
        <authorList>
            <person name="van West P."/>
            <person name="Kamoun S."/>
            <person name="van't Klooster J.W."/>
            <person name="Govers F."/>
        </authorList>
    </citation>
    <scope>NUCLEOTIDE SEQUENCE [MRNA]</scope>
    <source>
        <strain>Isolate 88069</strain>
    </source>
</reference>
<keyword id="KW-0472">Membrane</keyword>
<keyword id="KW-0812">Transmembrane</keyword>
<keyword id="KW-1133">Transmembrane helix</keyword>